<keyword id="KW-0004">4Fe-4S</keyword>
<keyword id="KW-0249">Electron transport</keyword>
<keyword id="KW-0408">Iron</keyword>
<keyword id="KW-0411">Iron-sulfur</keyword>
<keyword id="KW-0479">Metal-binding</keyword>
<keyword id="KW-0500">Molybdenum</keyword>
<keyword id="KW-0534">Nitrate assimilation</keyword>
<keyword id="KW-0560">Oxidoreductase</keyword>
<keyword id="KW-0574">Periplasm</keyword>
<keyword id="KW-0732">Signal</keyword>
<keyword id="KW-0813">Transport</keyword>
<evidence type="ECO:0000255" key="1">
    <source>
        <dbReference type="HAMAP-Rule" id="MF_01630"/>
    </source>
</evidence>
<proteinExistence type="inferred from homology"/>
<organism>
    <name type="scientific">Vibrio vulnificus (strain CMCP6)</name>
    <dbReference type="NCBI Taxonomy" id="216895"/>
    <lineage>
        <taxon>Bacteria</taxon>
        <taxon>Pseudomonadati</taxon>
        <taxon>Pseudomonadota</taxon>
        <taxon>Gammaproteobacteria</taxon>
        <taxon>Vibrionales</taxon>
        <taxon>Vibrionaceae</taxon>
        <taxon>Vibrio</taxon>
    </lineage>
</organism>
<comment type="function">
    <text evidence="1">Catalytic subunit of the periplasmic nitrate reductase complex NapAB. Receives electrons from NapB and catalyzes the reduction of nitrate to nitrite.</text>
</comment>
<comment type="catalytic activity">
    <reaction evidence="1">
        <text>2 Fe(II)-[cytochrome] + nitrate + 2 H(+) = 2 Fe(III)-[cytochrome] + nitrite + H2O</text>
        <dbReference type="Rhea" id="RHEA:12909"/>
        <dbReference type="Rhea" id="RHEA-COMP:11777"/>
        <dbReference type="Rhea" id="RHEA-COMP:11778"/>
        <dbReference type="ChEBI" id="CHEBI:15377"/>
        <dbReference type="ChEBI" id="CHEBI:15378"/>
        <dbReference type="ChEBI" id="CHEBI:16301"/>
        <dbReference type="ChEBI" id="CHEBI:17632"/>
        <dbReference type="ChEBI" id="CHEBI:29033"/>
        <dbReference type="ChEBI" id="CHEBI:29034"/>
        <dbReference type="EC" id="1.9.6.1"/>
    </reaction>
</comment>
<comment type="cofactor">
    <cofactor evidence="1">
        <name>[4Fe-4S] cluster</name>
        <dbReference type="ChEBI" id="CHEBI:49883"/>
    </cofactor>
    <text evidence="1">Binds 1 [4Fe-4S] cluster.</text>
</comment>
<comment type="cofactor">
    <cofactor evidence="1">
        <name>Mo-bis(molybdopterin guanine dinucleotide)</name>
        <dbReference type="ChEBI" id="CHEBI:60539"/>
    </cofactor>
    <text evidence="1">Binds 1 molybdenum-bis(molybdopterin guanine dinucleotide) (Mo-bis-MGD) cofactor per subunit.</text>
</comment>
<comment type="subunit">
    <text evidence="1">Component of the periplasmic nitrate reductase NapAB complex composed of NapA and NapB.</text>
</comment>
<comment type="subcellular location">
    <subcellularLocation>
        <location evidence="1">Periplasm</location>
    </subcellularLocation>
</comment>
<comment type="PTM">
    <text evidence="1">Predicted to be exported by the Tat system. The position of the signal peptide cleavage has not been experimentally proven.</text>
</comment>
<comment type="similarity">
    <text evidence="1">Belongs to the prokaryotic molybdopterin-containing oxidoreductase family. NasA/NapA/NarB subfamily.</text>
</comment>
<gene>
    <name evidence="1" type="primary">napA</name>
    <name type="ordered locus">VV2_0721</name>
</gene>
<accession>Q8D623</accession>
<reference key="1">
    <citation type="submission" date="2002-12" db="EMBL/GenBank/DDBJ databases">
        <title>Complete genome sequence of Vibrio vulnificus CMCP6.</title>
        <authorList>
            <person name="Rhee J.H."/>
            <person name="Kim S.Y."/>
            <person name="Chung S.S."/>
            <person name="Kim J.J."/>
            <person name="Moon Y.H."/>
            <person name="Jeong H."/>
            <person name="Choy H.E."/>
        </authorList>
    </citation>
    <scope>NUCLEOTIDE SEQUENCE [LARGE SCALE GENOMIC DNA]</scope>
    <source>
        <strain>CMCP6</strain>
    </source>
</reference>
<name>NAPA_VIBVU</name>
<sequence length="829" mass="92816">MKMTRRAFVKANAAASAAAVAGITLPASAANLIASSDQTKITWDKAPCRFCGTGCSVLVGTQNGKVVATQGDPEAPVNKGLNCIKGYFLSKIMYGQDRLTQPLLRMKDGKYDKEGDFTPVSWDVAFDTMAEKWKASLAKKGPTSIGMFGSGQWTVMEGYAAAKMMKAGFRSNNIDPNARHCMASAVVGFMRTFGIDEPMGCYDDFEHADSFVLWGSNMAEMHPVLWTRITDRRLSHPHVKVNVLSTYYHRSFELADSGYIFKPQSDLAIANFIANYIIQNDAVNWDFVNKHTNFKQATTDIGYGLRDDDPLQKQAKNPNSGNMTSISFEEYKKSVAPYTVEKASEMSGVAQDKLIELAKQYADPNTKVMSLWTMGMNQHTRGVWMNSLVYNIHLLTGKISTPGNSPFSLTGQPSACGTAREVGTFAHRLPADMVVANPKHRAIAEKIWKLPEGTIPPKPGFHAVLQDRMLHDGVLNCYWVQCNNNMQAGPNINGERLPGYRNPENFIVVSDPYPTATAQAADLILPTAMWIEKEGAYGNAERRTQAWYQQVGTVGEAKSDLWQVMEFSKRFKMEEVWPEELLAKAPQYRGKTMYDMLFANGQVDKFPLSEARQLNDDSHHFGFYVQKGLFEEYAEFGRGHGHDLAPYDVYHTVRGLRWPVVDGKETLWRYKEGSDPYAKKGSGWDFYGKPDGKALIISAPYEAPPESPDAEYDMWLCTGRVLEHWHTGTMTRRVPELYKAVPDAVCYIHPEDAKARGLRRGDEVLISNKRGEVRVRVETRGRNRPPQGLVFVPFFDARILINKLILDATDPLSKQTDFKKCPVKITKVA</sequence>
<protein>
    <recommendedName>
        <fullName evidence="1">Periplasmic nitrate reductase</fullName>
        <ecNumber evidence="1">1.9.6.1</ecNumber>
    </recommendedName>
</protein>
<dbReference type="EC" id="1.9.6.1" evidence="1"/>
<dbReference type="EMBL" id="AE016796">
    <property type="protein sequence ID" value="AAO07656.1"/>
    <property type="molecule type" value="Genomic_DNA"/>
</dbReference>
<dbReference type="RefSeq" id="WP_011081654.1">
    <property type="nucleotide sequence ID" value="NC_004460.2"/>
</dbReference>
<dbReference type="SMR" id="Q8D623"/>
<dbReference type="KEGG" id="vvu:VV2_0721"/>
<dbReference type="HOGENOM" id="CLU_000422_13_4_6"/>
<dbReference type="Proteomes" id="UP000002275">
    <property type="component" value="Chromosome 2"/>
</dbReference>
<dbReference type="GO" id="GO:0016020">
    <property type="term" value="C:membrane"/>
    <property type="evidence" value="ECO:0007669"/>
    <property type="project" value="TreeGrafter"/>
</dbReference>
<dbReference type="GO" id="GO:0009325">
    <property type="term" value="C:nitrate reductase complex"/>
    <property type="evidence" value="ECO:0007669"/>
    <property type="project" value="TreeGrafter"/>
</dbReference>
<dbReference type="GO" id="GO:0042597">
    <property type="term" value="C:periplasmic space"/>
    <property type="evidence" value="ECO:0007669"/>
    <property type="project" value="UniProtKB-SubCell"/>
</dbReference>
<dbReference type="GO" id="GO:0051539">
    <property type="term" value="F:4 iron, 4 sulfur cluster binding"/>
    <property type="evidence" value="ECO:0007669"/>
    <property type="project" value="UniProtKB-KW"/>
</dbReference>
<dbReference type="GO" id="GO:0009055">
    <property type="term" value="F:electron transfer activity"/>
    <property type="evidence" value="ECO:0007669"/>
    <property type="project" value="UniProtKB-UniRule"/>
</dbReference>
<dbReference type="GO" id="GO:0005506">
    <property type="term" value="F:iron ion binding"/>
    <property type="evidence" value="ECO:0007669"/>
    <property type="project" value="UniProtKB-UniRule"/>
</dbReference>
<dbReference type="GO" id="GO:0030151">
    <property type="term" value="F:molybdenum ion binding"/>
    <property type="evidence" value="ECO:0007669"/>
    <property type="project" value="InterPro"/>
</dbReference>
<dbReference type="GO" id="GO:0043546">
    <property type="term" value="F:molybdopterin cofactor binding"/>
    <property type="evidence" value="ECO:0007669"/>
    <property type="project" value="InterPro"/>
</dbReference>
<dbReference type="GO" id="GO:0050140">
    <property type="term" value="F:nitrate reductase (cytochrome) activity"/>
    <property type="evidence" value="ECO:0007669"/>
    <property type="project" value="UniProtKB-EC"/>
</dbReference>
<dbReference type="GO" id="GO:0045333">
    <property type="term" value="P:cellular respiration"/>
    <property type="evidence" value="ECO:0007669"/>
    <property type="project" value="UniProtKB-ARBA"/>
</dbReference>
<dbReference type="GO" id="GO:0006777">
    <property type="term" value="P:Mo-molybdopterin cofactor biosynthetic process"/>
    <property type="evidence" value="ECO:0007669"/>
    <property type="project" value="UniProtKB-UniRule"/>
</dbReference>
<dbReference type="GO" id="GO:0042128">
    <property type="term" value="P:nitrate assimilation"/>
    <property type="evidence" value="ECO:0007669"/>
    <property type="project" value="UniProtKB-UniRule"/>
</dbReference>
<dbReference type="CDD" id="cd02791">
    <property type="entry name" value="MopB_CT_Nitrate-R-NapA-like"/>
    <property type="match status" value="1"/>
</dbReference>
<dbReference type="CDD" id="cd02754">
    <property type="entry name" value="MopB_Nitrate-R-NapA-like"/>
    <property type="match status" value="1"/>
</dbReference>
<dbReference type="FunFam" id="2.40.40.20:FF:000005">
    <property type="entry name" value="Periplasmic nitrate reductase"/>
    <property type="match status" value="1"/>
</dbReference>
<dbReference type="Gene3D" id="2.40.40.20">
    <property type="match status" value="1"/>
</dbReference>
<dbReference type="Gene3D" id="3.30.200.210">
    <property type="match status" value="1"/>
</dbReference>
<dbReference type="Gene3D" id="3.40.50.740">
    <property type="match status" value="1"/>
</dbReference>
<dbReference type="Gene3D" id="3.40.228.10">
    <property type="entry name" value="Dimethylsulfoxide Reductase, domain 2"/>
    <property type="match status" value="1"/>
</dbReference>
<dbReference type="HAMAP" id="MF_01630">
    <property type="entry name" value="Nitrate_reduct_NapA"/>
    <property type="match status" value="1"/>
</dbReference>
<dbReference type="InterPro" id="IPR009010">
    <property type="entry name" value="Asp_de-COase-like_dom_sf"/>
</dbReference>
<dbReference type="InterPro" id="IPR041957">
    <property type="entry name" value="CT_Nitrate-R-NapA-like"/>
</dbReference>
<dbReference type="InterPro" id="IPR006657">
    <property type="entry name" value="MoPterin_dinucl-bd_dom"/>
</dbReference>
<dbReference type="InterPro" id="IPR006656">
    <property type="entry name" value="Mopterin_OxRdtase"/>
</dbReference>
<dbReference type="InterPro" id="IPR006963">
    <property type="entry name" value="Mopterin_OxRdtase_4Fe-4S_dom"/>
</dbReference>
<dbReference type="InterPro" id="IPR027467">
    <property type="entry name" value="MopterinOxRdtase_cofactor_BS"/>
</dbReference>
<dbReference type="InterPro" id="IPR010051">
    <property type="entry name" value="Periplasm_NO3_reductase_lsu"/>
</dbReference>
<dbReference type="InterPro" id="IPR050123">
    <property type="entry name" value="Prok_molybdopt-oxidoreductase"/>
</dbReference>
<dbReference type="InterPro" id="IPR006311">
    <property type="entry name" value="TAT_signal"/>
</dbReference>
<dbReference type="NCBIfam" id="TIGR01706">
    <property type="entry name" value="NAPA"/>
    <property type="match status" value="1"/>
</dbReference>
<dbReference type="NCBIfam" id="NF010055">
    <property type="entry name" value="PRK13532.1"/>
    <property type="match status" value="1"/>
</dbReference>
<dbReference type="PANTHER" id="PTHR43105:SF11">
    <property type="entry name" value="PERIPLASMIC NITRATE REDUCTASE"/>
    <property type="match status" value="1"/>
</dbReference>
<dbReference type="PANTHER" id="PTHR43105">
    <property type="entry name" value="RESPIRATORY NITRATE REDUCTASE"/>
    <property type="match status" value="1"/>
</dbReference>
<dbReference type="Pfam" id="PF04879">
    <property type="entry name" value="Molybdop_Fe4S4"/>
    <property type="match status" value="1"/>
</dbReference>
<dbReference type="Pfam" id="PF00384">
    <property type="entry name" value="Molybdopterin"/>
    <property type="match status" value="1"/>
</dbReference>
<dbReference type="Pfam" id="PF01568">
    <property type="entry name" value="Molydop_binding"/>
    <property type="match status" value="1"/>
</dbReference>
<dbReference type="SMART" id="SM00926">
    <property type="entry name" value="Molybdop_Fe4S4"/>
    <property type="match status" value="1"/>
</dbReference>
<dbReference type="SUPFAM" id="SSF50692">
    <property type="entry name" value="ADC-like"/>
    <property type="match status" value="1"/>
</dbReference>
<dbReference type="SUPFAM" id="SSF53706">
    <property type="entry name" value="Formate dehydrogenase/DMSO reductase, domains 1-3"/>
    <property type="match status" value="1"/>
</dbReference>
<dbReference type="PROSITE" id="PS51669">
    <property type="entry name" value="4FE4S_MOW_BIS_MGD"/>
    <property type="match status" value="1"/>
</dbReference>
<dbReference type="PROSITE" id="PS00551">
    <property type="entry name" value="MOLYBDOPTERIN_PROK_1"/>
    <property type="match status" value="1"/>
</dbReference>
<dbReference type="PROSITE" id="PS51318">
    <property type="entry name" value="TAT"/>
    <property type="match status" value="1"/>
</dbReference>
<feature type="signal peptide" description="Tat-type signal" evidence="1">
    <location>
        <begin position="1"/>
        <end position="30"/>
    </location>
</feature>
<feature type="chain" id="PRO_0000046012" description="Periplasmic nitrate reductase" evidence="1">
    <location>
        <begin position="31"/>
        <end position="829"/>
    </location>
</feature>
<feature type="domain" description="4Fe-4S Mo/W bis-MGD-type" evidence="1">
    <location>
        <begin position="41"/>
        <end position="97"/>
    </location>
</feature>
<feature type="binding site" evidence="1">
    <location>
        <position position="48"/>
    </location>
    <ligand>
        <name>[4Fe-4S] cluster</name>
        <dbReference type="ChEBI" id="CHEBI:49883"/>
    </ligand>
</feature>
<feature type="binding site" evidence="1">
    <location>
        <position position="51"/>
    </location>
    <ligand>
        <name>[4Fe-4S] cluster</name>
        <dbReference type="ChEBI" id="CHEBI:49883"/>
    </ligand>
</feature>
<feature type="binding site" evidence="1">
    <location>
        <position position="55"/>
    </location>
    <ligand>
        <name>[4Fe-4S] cluster</name>
        <dbReference type="ChEBI" id="CHEBI:49883"/>
    </ligand>
</feature>
<feature type="binding site" evidence="1">
    <location>
        <position position="83"/>
    </location>
    <ligand>
        <name>[4Fe-4S] cluster</name>
        <dbReference type="ChEBI" id="CHEBI:49883"/>
    </ligand>
</feature>
<feature type="binding site" evidence="1">
    <location>
        <position position="85"/>
    </location>
    <ligand>
        <name>Mo-bis(molybdopterin guanine dinucleotide)</name>
        <dbReference type="ChEBI" id="CHEBI:60539"/>
    </ligand>
</feature>
<feature type="binding site" evidence="1">
    <location>
        <position position="152"/>
    </location>
    <ligand>
        <name>Mo-bis(molybdopterin guanine dinucleotide)</name>
        <dbReference type="ChEBI" id="CHEBI:60539"/>
    </ligand>
</feature>
<feature type="binding site" evidence="1">
    <location>
        <position position="177"/>
    </location>
    <ligand>
        <name>Mo-bis(molybdopterin guanine dinucleotide)</name>
        <dbReference type="ChEBI" id="CHEBI:60539"/>
    </ligand>
</feature>
<feature type="binding site" evidence="1">
    <location>
        <position position="181"/>
    </location>
    <ligand>
        <name>Mo-bis(molybdopterin guanine dinucleotide)</name>
        <dbReference type="ChEBI" id="CHEBI:60539"/>
    </ligand>
</feature>
<feature type="binding site" evidence="1">
    <location>
        <begin position="214"/>
        <end position="221"/>
    </location>
    <ligand>
        <name>Mo-bis(molybdopterin guanine dinucleotide)</name>
        <dbReference type="ChEBI" id="CHEBI:60539"/>
    </ligand>
</feature>
<feature type="binding site" evidence="1">
    <location>
        <begin position="245"/>
        <end position="249"/>
    </location>
    <ligand>
        <name>Mo-bis(molybdopterin guanine dinucleotide)</name>
        <dbReference type="ChEBI" id="CHEBI:60539"/>
    </ligand>
</feature>
<feature type="binding site" evidence="1">
    <location>
        <begin position="264"/>
        <end position="266"/>
    </location>
    <ligand>
        <name>Mo-bis(molybdopterin guanine dinucleotide)</name>
        <dbReference type="ChEBI" id="CHEBI:60539"/>
    </ligand>
</feature>
<feature type="binding site" evidence="1">
    <location>
        <position position="374"/>
    </location>
    <ligand>
        <name>Mo-bis(molybdopterin guanine dinucleotide)</name>
        <dbReference type="ChEBI" id="CHEBI:60539"/>
    </ligand>
</feature>
<feature type="binding site" evidence="1">
    <location>
        <position position="378"/>
    </location>
    <ligand>
        <name>Mo-bis(molybdopterin guanine dinucleotide)</name>
        <dbReference type="ChEBI" id="CHEBI:60539"/>
    </ligand>
</feature>
<feature type="binding site" evidence="1">
    <location>
        <position position="484"/>
    </location>
    <ligand>
        <name>Mo-bis(molybdopterin guanine dinucleotide)</name>
        <dbReference type="ChEBI" id="CHEBI:60539"/>
    </ligand>
</feature>
<feature type="binding site" evidence="1">
    <location>
        <begin position="510"/>
        <end position="511"/>
    </location>
    <ligand>
        <name>Mo-bis(molybdopterin guanine dinucleotide)</name>
        <dbReference type="ChEBI" id="CHEBI:60539"/>
    </ligand>
</feature>
<feature type="binding site" evidence="1">
    <location>
        <position position="533"/>
    </location>
    <ligand>
        <name>Mo-bis(molybdopterin guanine dinucleotide)</name>
        <dbReference type="ChEBI" id="CHEBI:60539"/>
    </ligand>
</feature>
<feature type="binding site" evidence="1">
    <location>
        <position position="560"/>
    </location>
    <ligand>
        <name>Mo-bis(molybdopterin guanine dinucleotide)</name>
        <dbReference type="ChEBI" id="CHEBI:60539"/>
    </ligand>
</feature>
<feature type="binding site" evidence="1">
    <location>
        <begin position="718"/>
        <end position="727"/>
    </location>
    <ligand>
        <name>Mo-bis(molybdopterin guanine dinucleotide)</name>
        <dbReference type="ChEBI" id="CHEBI:60539"/>
    </ligand>
</feature>
<feature type="binding site" evidence="1">
    <location>
        <position position="794"/>
    </location>
    <ligand>
        <name>substrate</name>
    </ligand>
</feature>
<feature type="binding site" evidence="1">
    <location>
        <position position="802"/>
    </location>
    <ligand>
        <name>Mo-bis(molybdopterin guanine dinucleotide)</name>
        <dbReference type="ChEBI" id="CHEBI:60539"/>
    </ligand>
</feature>
<feature type="binding site" evidence="1">
    <location>
        <position position="819"/>
    </location>
    <ligand>
        <name>Mo-bis(molybdopterin guanine dinucleotide)</name>
        <dbReference type="ChEBI" id="CHEBI:60539"/>
    </ligand>
</feature>